<dbReference type="EC" id="1.14.15.28" evidence="2 6"/>
<dbReference type="EMBL" id="CP000480">
    <property type="protein sequence ID" value="ABK74975.1"/>
    <property type="molecule type" value="Genomic_DNA"/>
</dbReference>
<dbReference type="RefSeq" id="WP_011730892.1">
    <property type="nucleotide sequence ID" value="NZ_SIJM01000017.1"/>
</dbReference>
<dbReference type="RefSeq" id="YP_890144.1">
    <property type="nucleotide sequence ID" value="NC_008596.1"/>
</dbReference>
<dbReference type="PDB" id="2YOO">
    <property type="method" value="X-ray"/>
    <property type="resolution" value="1.69 A"/>
    <property type="chains" value="A/B/C/D=4-401"/>
</dbReference>
<dbReference type="PDB" id="3ZBY">
    <property type="method" value="X-ray"/>
    <property type="resolution" value="1.93 A"/>
    <property type="chains" value="A/B/C/D/E/F=1-401"/>
</dbReference>
<dbReference type="PDB" id="4TRI">
    <property type="method" value="X-ray"/>
    <property type="resolution" value="2.00 A"/>
    <property type="chains" value="A/B=1-401"/>
</dbReference>
<dbReference type="PDB" id="4UAX">
    <property type="method" value="X-ray"/>
    <property type="resolution" value="1.78 A"/>
    <property type="chains" value="A=1-401"/>
</dbReference>
<dbReference type="PDBsum" id="2YOO"/>
<dbReference type="PDBsum" id="3ZBY"/>
<dbReference type="PDBsum" id="4TRI"/>
<dbReference type="PDBsum" id="4UAX"/>
<dbReference type="SMR" id="A0R4Q6"/>
<dbReference type="STRING" id="246196.MSMEG_5918"/>
<dbReference type="PaxDb" id="246196-MSMEI_5758"/>
<dbReference type="GeneID" id="93460554"/>
<dbReference type="KEGG" id="msb:LJ00_29265"/>
<dbReference type="KEGG" id="msm:MSMEG_5918"/>
<dbReference type="PATRIC" id="fig|246196.19.peg.5758"/>
<dbReference type="eggNOG" id="COG2124">
    <property type="taxonomic scope" value="Bacteria"/>
</dbReference>
<dbReference type="OrthoDB" id="5241086at2"/>
<dbReference type="BRENDA" id="1.14.15.28">
    <property type="organism ID" value="3512"/>
</dbReference>
<dbReference type="UniPathway" id="UPA01058"/>
<dbReference type="EvolutionaryTrace" id="A0R4Q6"/>
<dbReference type="Proteomes" id="UP000000757">
    <property type="component" value="Chromosome"/>
</dbReference>
<dbReference type="GO" id="GO:0036199">
    <property type="term" value="F:cholest-4-en-3-one 26-monooxygenase activity"/>
    <property type="evidence" value="ECO:0007669"/>
    <property type="project" value="TreeGrafter"/>
</dbReference>
<dbReference type="GO" id="GO:0020037">
    <property type="term" value="F:heme binding"/>
    <property type="evidence" value="ECO:0007669"/>
    <property type="project" value="InterPro"/>
</dbReference>
<dbReference type="GO" id="GO:0005506">
    <property type="term" value="F:iron ion binding"/>
    <property type="evidence" value="ECO:0007669"/>
    <property type="project" value="InterPro"/>
</dbReference>
<dbReference type="GO" id="GO:0008395">
    <property type="term" value="F:steroid hydroxylase activity"/>
    <property type="evidence" value="ECO:0007669"/>
    <property type="project" value="TreeGrafter"/>
</dbReference>
<dbReference type="GO" id="GO:0006707">
    <property type="term" value="P:cholesterol catabolic process"/>
    <property type="evidence" value="ECO:0007669"/>
    <property type="project" value="UniProtKB-UniPathway"/>
</dbReference>
<dbReference type="CDD" id="cd11033">
    <property type="entry name" value="CYP142-like"/>
    <property type="match status" value="1"/>
</dbReference>
<dbReference type="FunFam" id="1.10.630.10:FF:000018">
    <property type="entry name" value="Cytochrome P450 monooxygenase"/>
    <property type="match status" value="1"/>
</dbReference>
<dbReference type="Gene3D" id="1.10.630.10">
    <property type="entry name" value="Cytochrome P450"/>
    <property type="match status" value="1"/>
</dbReference>
<dbReference type="InterPro" id="IPR001128">
    <property type="entry name" value="Cyt_P450"/>
</dbReference>
<dbReference type="InterPro" id="IPR002397">
    <property type="entry name" value="Cyt_P450_B"/>
</dbReference>
<dbReference type="InterPro" id="IPR017972">
    <property type="entry name" value="Cyt_P450_CS"/>
</dbReference>
<dbReference type="InterPro" id="IPR036396">
    <property type="entry name" value="Cyt_P450_sf"/>
</dbReference>
<dbReference type="PANTHER" id="PTHR46696:SF4">
    <property type="entry name" value="BIOTIN BIOSYNTHESIS CYTOCHROME P450"/>
    <property type="match status" value="1"/>
</dbReference>
<dbReference type="PANTHER" id="PTHR46696">
    <property type="entry name" value="P450, PUTATIVE (EUROFUNG)-RELATED"/>
    <property type="match status" value="1"/>
</dbReference>
<dbReference type="Pfam" id="PF00067">
    <property type="entry name" value="p450"/>
    <property type="match status" value="1"/>
</dbReference>
<dbReference type="PRINTS" id="PR00359">
    <property type="entry name" value="BP450"/>
</dbReference>
<dbReference type="PRINTS" id="PR00385">
    <property type="entry name" value="P450"/>
</dbReference>
<dbReference type="SUPFAM" id="SSF48264">
    <property type="entry name" value="Cytochrome P450"/>
    <property type="match status" value="1"/>
</dbReference>
<dbReference type="PROSITE" id="PS00086">
    <property type="entry name" value="CYTOCHROME_P450"/>
    <property type="match status" value="1"/>
</dbReference>
<accession>A0R4Q6</accession>
<keyword id="KW-0002">3D-structure</keyword>
<keyword id="KW-0153">Cholesterol metabolism</keyword>
<keyword id="KW-0349">Heme</keyword>
<keyword id="KW-0408">Iron</keyword>
<keyword id="KW-0442">Lipid degradation</keyword>
<keyword id="KW-0443">Lipid metabolism</keyword>
<keyword id="KW-0479">Metal-binding</keyword>
<keyword id="KW-0503">Monooxygenase</keyword>
<keyword id="KW-0521">NADP</keyword>
<keyword id="KW-0560">Oxidoreductase</keyword>
<keyword id="KW-1185">Reference proteome</keyword>
<keyword id="KW-0753">Steroid metabolism</keyword>
<keyword id="KW-1207">Sterol metabolism</keyword>
<feature type="chain" id="PRO_0000438724" description="Steroid C26-monooxygenase">
    <location>
        <begin position="1"/>
        <end position="401"/>
    </location>
</feature>
<feature type="binding site" description="axial binding residue" evidence="2 3 8 9 10 11">
    <location>
        <position position="343"/>
    </location>
    <ligand>
        <name>heme</name>
        <dbReference type="ChEBI" id="CHEBI:30413"/>
    </ligand>
    <ligandPart>
        <name>Fe</name>
        <dbReference type="ChEBI" id="CHEBI:18248"/>
    </ligandPart>
</feature>
<feature type="helix" evidence="12">
    <location>
        <begin position="15"/>
        <end position="19"/>
    </location>
</feature>
<feature type="helix" evidence="12">
    <location>
        <begin position="23"/>
        <end position="33"/>
    </location>
</feature>
<feature type="strand" evidence="12">
    <location>
        <begin position="35"/>
        <end position="38"/>
    </location>
</feature>
<feature type="strand" evidence="12">
    <location>
        <begin position="44"/>
        <end position="46"/>
    </location>
</feature>
<feature type="helix" evidence="12">
    <location>
        <begin position="49"/>
        <end position="57"/>
    </location>
</feature>
<feature type="turn" evidence="12">
    <location>
        <begin position="59"/>
        <end position="61"/>
    </location>
</feature>
<feature type="strand" evidence="12">
    <location>
        <begin position="62"/>
        <end position="64"/>
    </location>
</feature>
<feature type="strand" evidence="13">
    <location>
        <begin position="70"/>
        <end position="72"/>
    </location>
</feature>
<feature type="helix" evidence="12">
    <location>
        <begin position="78"/>
        <end position="80"/>
    </location>
</feature>
<feature type="helix" evidence="12">
    <location>
        <begin position="85"/>
        <end position="93"/>
    </location>
</feature>
<feature type="helix" evidence="12">
    <location>
        <begin position="94"/>
        <end position="96"/>
    </location>
</feature>
<feature type="helix" evidence="12">
    <location>
        <begin position="99"/>
        <end position="103"/>
    </location>
</feature>
<feature type="helix" evidence="12">
    <location>
        <begin position="106"/>
        <end position="121"/>
    </location>
</feature>
<feature type="strand" evidence="12">
    <location>
        <begin position="124"/>
        <end position="127"/>
    </location>
</feature>
<feature type="helix" evidence="12">
    <location>
        <begin position="128"/>
        <end position="131"/>
    </location>
</feature>
<feature type="turn" evidence="12">
    <location>
        <begin position="132"/>
        <end position="134"/>
    </location>
</feature>
<feature type="helix" evidence="12">
    <location>
        <begin position="135"/>
        <end position="145"/>
    </location>
</feature>
<feature type="helix" evidence="12">
    <location>
        <begin position="149"/>
        <end position="151"/>
    </location>
</feature>
<feature type="helix" evidence="12">
    <location>
        <begin position="152"/>
        <end position="163"/>
    </location>
</feature>
<feature type="strand" evidence="12">
    <location>
        <begin position="168"/>
        <end position="170"/>
    </location>
</feature>
<feature type="helix" evidence="12">
    <location>
        <begin position="172"/>
        <end position="198"/>
    </location>
</feature>
<feature type="helix" evidence="12">
    <location>
        <begin position="204"/>
        <end position="209"/>
    </location>
</feature>
<feature type="helix" evidence="12">
    <location>
        <begin position="220"/>
        <end position="235"/>
    </location>
</feature>
<feature type="helix" evidence="12">
    <location>
        <begin position="238"/>
        <end position="251"/>
    </location>
</feature>
<feature type="helix" evidence="12">
    <location>
        <begin position="253"/>
        <end position="261"/>
    </location>
</feature>
<feature type="helix" evidence="12">
    <location>
        <begin position="263"/>
        <end position="265"/>
    </location>
</feature>
<feature type="helix" evidence="12">
    <location>
        <begin position="266"/>
        <end position="277"/>
    </location>
</feature>
<feature type="strand" evidence="12">
    <location>
        <begin position="282"/>
        <end position="289"/>
    </location>
</feature>
<feature type="strand" evidence="12">
    <location>
        <begin position="291"/>
        <end position="293"/>
    </location>
</feature>
<feature type="strand" evidence="12">
    <location>
        <begin position="296"/>
        <end position="298"/>
    </location>
</feature>
<feature type="strand" evidence="12">
    <location>
        <begin position="303"/>
        <end position="307"/>
    </location>
</feature>
<feature type="helix" evidence="12">
    <location>
        <begin position="308"/>
        <end position="311"/>
    </location>
</feature>
<feature type="helix" evidence="12">
    <location>
        <begin position="315"/>
        <end position="318"/>
    </location>
</feature>
<feature type="helix" evidence="12">
    <location>
        <begin position="339"/>
        <end position="341"/>
    </location>
</feature>
<feature type="helix" evidence="12">
    <location>
        <begin position="346"/>
        <end position="363"/>
    </location>
</feature>
<feature type="strand" evidence="12">
    <location>
        <begin position="368"/>
        <end position="371"/>
    </location>
</feature>
<feature type="strand" evidence="12">
    <location>
        <begin position="381"/>
        <end position="383"/>
    </location>
</feature>
<feature type="strand" evidence="12">
    <location>
        <begin position="390"/>
        <end position="392"/>
    </location>
</feature>
<protein>
    <recommendedName>
        <fullName evidence="4">Steroid C26-monooxygenase</fullName>
        <ecNumber evidence="2 6">1.14.15.28</ecNumber>
    </recommendedName>
    <alternativeName>
        <fullName evidence="4">Cholest-4-en-3-one C26-monooxygenase</fullName>
    </alternativeName>
    <alternativeName>
        <fullName evidence="4">Cholest-4-en-3-one C26-monooxygenase [(25R)-3-oxocholest-4-en-26-oate forming]</fullName>
    </alternativeName>
    <alternativeName>
        <fullName evidence="4">Cholesterol C26-monooxygenase</fullName>
    </alternativeName>
    <alternativeName>
        <fullName evidence="4">Cholesterol C26-monooxygenase [(25R)-3beta-hydroxycholest-5-en-26-oate forming]</fullName>
    </alternativeName>
    <alternativeName>
        <fullName evidence="4">Cytochrome P450 142</fullName>
    </alternativeName>
    <alternativeName>
        <fullName evidence="1">Steroid C27-monooxygenase</fullName>
    </alternativeName>
</protein>
<evidence type="ECO:0000250" key="1">
    <source>
        <dbReference type="UniProtKB" id="P9WPL5"/>
    </source>
</evidence>
<evidence type="ECO:0000269" key="2">
    <source>
    </source>
</evidence>
<evidence type="ECO:0000269" key="3">
    <source>
    </source>
</evidence>
<evidence type="ECO:0000303" key="4">
    <source>
    </source>
</evidence>
<evidence type="ECO:0000305" key="5"/>
<evidence type="ECO:0000305" key="6">
    <source>
    </source>
</evidence>
<evidence type="ECO:0000312" key="7">
    <source>
        <dbReference type="EMBL" id="ABK74975.1"/>
    </source>
</evidence>
<evidence type="ECO:0007744" key="8">
    <source>
        <dbReference type="PDB" id="2YOO"/>
    </source>
</evidence>
<evidence type="ECO:0007744" key="9">
    <source>
        <dbReference type="PDB" id="3ZBY"/>
    </source>
</evidence>
<evidence type="ECO:0007744" key="10">
    <source>
        <dbReference type="PDB" id="4TRI"/>
    </source>
</evidence>
<evidence type="ECO:0007744" key="11">
    <source>
        <dbReference type="PDB" id="4UAX"/>
    </source>
</evidence>
<evidence type="ECO:0007829" key="12">
    <source>
        <dbReference type="PDB" id="2YOO"/>
    </source>
</evidence>
<evidence type="ECO:0007829" key="13">
    <source>
        <dbReference type="PDB" id="4UAX"/>
    </source>
</evidence>
<reference key="1">
    <citation type="submission" date="2006-10" db="EMBL/GenBank/DDBJ databases">
        <authorList>
            <person name="Fleischmann R.D."/>
            <person name="Dodson R.J."/>
            <person name="Haft D.H."/>
            <person name="Merkel J.S."/>
            <person name="Nelson W.C."/>
            <person name="Fraser C.M."/>
        </authorList>
    </citation>
    <scope>NUCLEOTIDE SEQUENCE [LARGE SCALE GENOMIC DNA]</scope>
    <source>
        <strain>ATCC 700084 / mc(2)155</strain>
    </source>
</reference>
<reference key="2">
    <citation type="journal article" date="2013" name="Environ. Microbiol.">
        <title>A highly conserved mycobacterial cholesterol catabolic pathway.</title>
        <authorList>
            <person name="Garcia-Fernandez E."/>
            <person name="Frank D.J."/>
            <person name="Galan B."/>
            <person name="Kells P.M."/>
            <person name="Podust L.M."/>
            <person name="Garcia J.L."/>
            <person name="Ortiz de Montellano P.R."/>
        </authorList>
    </citation>
    <scope>X-RAY CRYSTALLOGRAPHY (1.69 ANGSTROMS) OF 4-401 IN COMPLEX WITH HEME</scope>
    <scope>FUNCTION</scope>
    <scope>CATALYTIC ACTIVITY</scope>
    <scope>BIOPHYSICOCHEMICAL PROPERTIES</scope>
    <scope>COFACTOR</scope>
    <scope>DISRUPTION PHENOTYPE</scope>
    <scope>INDUCTION</scope>
    <scope>SUBSTRATE SPECIFICITY</scope>
    <scope>PATHWAY</scope>
    <source>
        <strain>ATCC 700084 / mc(2)155</strain>
    </source>
</reference>
<reference key="3">
    <citation type="journal article" date="2014" name="J. Biol. Chem.">
        <title>Cholesterol ester oxidation by mycobacterial cytochrome P450.</title>
        <authorList>
            <person name="Frank D.J."/>
            <person name="Madrona Y."/>
            <person name="Ortiz de Montellano P.R."/>
        </authorList>
    </citation>
    <scope>X-RAY CRYSTALLOGRAPHY (1.78 ANGSTROMS) IN COMPLEX WITH HEME</scope>
    <scope>FUNCTION</scope>
    <scope>CATALYTIC ACTIVITY</scope>
    <scope>BIOPHYSICOCHEMICAL PROPERTIES</scope>
    <scope>COFACTOR</scope>
</reference>
<comment type="function">
    <text evidence="2 3">Involved in the utilization of cholesterol as the sole carbon and energy source by degrading the side chain. Primarily catalyzes the sequential oxidation of the terminal methyl of cholest-4-en-3-one into (25R)-26-hydroxycholest-4-en-3-one (alcohol), (25R)-26-oxocholest-4-en-3-one (aldehyde), to finally yield the carboxylic acid (25R)-3-oxocholest-4-en-26-oate. Also able to sequentially oxidize cholesterol itself, not only cholest-4-en-3-one.</text>
</comment>
<comment type="catalytic activity">
    <reaction evidence="2 6">
        <text>cholest-4-en-3-one + 6 reduced [2Fe-2S]-[ferredoxin] + 3 O2 + 5 H(+) = (25R)-3-oxocholest-4-en-26-oate + 6 oxidized [2Fe-2S]-[ferredoxin] + 4 H2O</text>
        <dbReference type="Rhea" id="RHEA:49996"/>
        <dbReference type="Rhea" id="RHEA-COMP:10000"/>
        <dbReference type="Rhea" id="RHEA-COMP:10001"/>
        <dbReference type="ChEBI" id="CHEBI:15377"/>
        <dbReference type="ChEBI" id="CHEBI:15378"/>
        <dbReference type="ChEBI" id="CHEBI:15379"/>
        <dbReference type="ChEBI" id="CHEBI:16175"/>
        <dbReference type="ChEBI" id="CHEBI:33737"/>
        <dbReference type="ChEBI" id="CHEBI:33738"/>
        <dbReference type="ChEBI" id="CHEBI:71570"/>
        <dbReference type="EC" id="1.14.15.28"/>
    </reaction>
</comment>
<comment type="cofactor">
    <cofactor evidence="2 3">
        <name>heme</name>
        <dbReference type="ChEBI" id="CHEBI:30413"/>
    </cofactor>
</comment>
<comment type="biophysicochemical properties">
    <kinetics>
        <KM evidence="2">10.3 uM for cholest-4-en-3-one</KM>
        <KM evidence="3">39.8 uM for cholesteryl sulfate</KM>
    </kinetics>
</comment>
<comment type="pathway">
    <text evidence="4">Steroid metabolism; cholesterol degradation.</text>
</comment>
<comment type="induction">
    <text evidence="2">By cholesterol.</text>
</comment>
<comment type="disruption phenotype">
    <text evidence="2">Cells lacking this gene show a slight reduction in the levels of cholest-4-en-3-one-26-oate, but the concentration of 26-hydroxycholest-4-en-3-one is not measurably affected. The levels of 26-hydroxycholest-4-en-3-one and cholest-4-on-3-one-26-oate are drastically reduced in cells lacking both cyp125A3 and cyp142A2.</text>
</comment>
<comment type="similarity">
    <text evidence="5">Belongs to the cytochrome P450 family.</text>
</comment>
<proteinExistence type="evidence at protein level"/>
<organism>
    <name type="scientific">Mycolicibacterium smegmatis (strain ATCC 700084 / mc(2)155)</name>
    <name type="common">Mycobacterium smegmatis</name>
    <dbReference type="NCBI Taxonomy" id="246196"/>
    <lineage>
        <taxon>Bacteria</taxon>
        <taxon>Bacillati</taxon>
        <taxon>Actinomycetota</taxon>
        <taxon>Actinomycetes</taxon>
        <taxon>Mycobacteriales</taxon>
        <taxon>Mycobacteriaceae</taxon>
        <taxon>Mycolicibacterium</taxon>
    </lineage>
</organism>
<name>CP142_MYCS2</name>
<sequence>MTQMLTRPDVDLVNGMFYADGGAREAYRWMRANEPVFRDRNGLAAATTYQAVLDAERNPELFSSTGGIRPDQPGMPYMIDMDDPQHLLRRKLVNAGFTRKRVMDKVDSIGRLCDTLIDAVCERGECDFVRDIAAPLPMAVIGDMLGVLPTERDMLLKWSDDLVCGLSSHVDEAAIQKLMDTFAAYTEFTKDVITKRRAEPTDDLFSVLVNSEVEGQRMSDDEIVFETLLILIGGDETTRHTLSGGTEQLLRHRDQWDALVADVDLLPGAIEEMLRWTSPVKNMCRTLTADTVFHGTELRAGEKIMLMFESANFDESVFGDPDNFRIDRNPNSHVAFGFGTHFCLGNQLARLELRLMTERVLRRLPDLRLADDAPVPLRPANFVSGPESMPVVFTPSAPVLA</sequence>
<gene>
    <name evidence="4" type="primary">cyp142</name>
    <name evidence="4" type="synonym">cyp142A2</name>
    <name evidence="7" type="ordered locus">MSMEG_5918</name>
</gene>